<feature type="chain" id="PRO_0000452265" description="Meiotic driver wtf19">
    <location>
        <begin position="1"/>
        <end position="414"/>
    </location>
</feature>
<feature type="transmembrane region" description="Helical" evidence="3">
    <location>
        <begin position="99"/>
        <end position="119"/>
    </location>
</feature>
<feature type="transmembrane region" description="Helical" evidence="3">
    <location>
        <begin position="136"/>
        <end position="156"/>
    </location>
</feature>
<feature type="transmembrane region" description="Helical" evidence="3">
    <location>
        <begin position="170"/>
        <end position="190"/>
    </location>
</feature>
<feature type="transmembrane region" description="Helical" evidence="3">
    <location>
        <begin position="192"/>
        <end position="212"/>
    </location>
</feature>
<feature type="transmembrane region" description="Helical" evidence="3">
    <location>
        <begin position="222"/>
        <end position="242"/>
    </location>
</feature>
<feature type="transmembrane region" description="Helical" evidence="3">
    <location>
        <begin position="247"/>
        <end position="267"/>
    </location>
</feature>
<feature type="transmembrane region" description="Helical" evidence="3">
    <location>
        <begin position="284"/>
        <end position="304"/>
    </location>
</feature>
<feature type="transmembrane region" description="Helical" evidence="3">
    <location>
        <begin position="311"/>
        <end position="331"/>
    </location>
</feature>
<feature type="transmembrane region" description="Helical" evidence="3">
    <location>
        <begin position="339"/>
        <end position="359"/>
    </location>
</feature>
<feature type="region of interest" description="Disordered" evidence="4">
    <location>
        <begin position="1"/>
        <end position="94"/>
    </location>
</feature>
<feature type="compositionally biased region" description="Basic and acidic residues" evidence="4">
    <location>
        <begin position="11"/>
        <end position="29"/>
    </location>
</feature>
<feature type="compositionally biased region" description="Polar residues" evidence="4">
    <location>
        <begin position="57"/>
        <end position="72"/>
    </location>
</feature>
<feature type="splice variant" id="VSP_060935" description="In isoform 2." evidence="5">
    <location>
        <begin position="1"/>
        <end position="55"/>
    </location>
</feature>
<proteinExistence type="inferred from homology"/>
<protein>
    <recommendedName>
        <fullName evidence="6">Meiotic driver wtf19</fullName>
    </recommendedName>
</protein>
<organism evidence="8">
    <name type="scientific">Schizosaccharomyces kambucha</name>
    <name type="common">Fission yeast</name>
    <dbReference type="NCBI Taxonomy" id="204045"/>
    <lineage>
        <taxon>Eukaryota</taxon>
        <taxon>Fungi</taxon>
        <taxon>Dikarya</taxon>
        <taxon>Ascomycota</taxon>
        <taxon>Taphrinomycotina</taxon>
        <taxon>Schizosaccharomycetes</taxon>
        <taxon>Schizosaccharomycetales</taxon>
        <taxon>Schizosaccharomycetaceae</taxon>
        <taxon>Schizosaccharomyces</taxon>
    </lineage>
</organism>
<gene>
    <name evidence="8" type="primary">wtf19</name>
</gene>
<keyword id="KW-0024">Alternative initiation</keyword>
<keyword id="KW-0963">Cytoplasm</keyword>
<keyword id="KW-0256">Endoplasmic reticulum</keyword>
<keyword id="KW-0472">Membrane</keyword>
<keyword id="KW-0800">Toxin</keyword>
<keyword id="KW-0812">Transmembrane</keyword>
<keyword id="KW-1133">Transmembrane helix</keyword>
<keyword id="KW-0926">Vacuole</keyword>
<sequence length="414" mass="46367">MKNKYYPVRTSMDEMNAKNDNEIDLEKGPLPEYNSEDGSTLPPYSENLNLKDPKQMGANNPNLFNTDESTTPPDYGEDSLSNTHRENHSSGTADNSSPFLIKLLISFIPIFVLNVPAVCYLTYKDALFKDYGKDEWVYFGVWCAICLMIFISLWCFYETWTQAVAQCVKVTVIFLAQCIKVTVISLAQCVKVTAIFLAQCIKVTVISLAQCVKVTAIFLAKCVKVTVISLAKCVKVISIGLFNIRREMMIIIWILWLIICCILFGCVKDGRLNFNKALICSTCTISAVLFLIVSSVCIPIWTLWRALSGMLQVLGIHGIIAVLVNGLMSLFGKHFGWRGYEIEGFVLFFTSSALFLYEMERPGVLKRLRNTTGNVIGYICGGIEDAFRRIKNAFRGANDNNNIPLGEMDVEGEV</sequence>
<reference evidence="8" key="1">
    <citation type="journal article" date="2020" name="PLoS Genet.">
        <title>Dramatically diverse Schizosaccharomyces pombe wtf meiotic drivers all display high gamete-killing efficiency.</title>
        <authorList>
            <person name="Bravo Nunez M.A."/>
            <person name="Sabbarini I.M."/>
            <person name="Eickbush M.T."/>
            <person name="Liang Y."/>
            <person name="Lange J.J."/>
            <person name="Kent A.M."/>
            <person name="Zanders S.E."/>
        </authorList>
    </citation>
    <scope>NUCLEOTIDE SEQUENCE [GENOMIC DNA]</scope>
    <scope>FUNCTION</scope>
    <scope>ALTERNATIVE INITIATION (ISOFORMS 1 AND 2)</scope>
</reference>
<evidence type="ECO:0000250" key="1">
    <source>
        <dbReference type="UniProtKB" id="A0A218N034"/>
    </source>
</evidence>
<evidence type="ECO:0000250" key="2">
    <source>
        <dbReference type="UniProtKB" id="O74420"/>
    </source>
</evidence>
<evidence type="ECO:0000255" key="3"/>
<evidence type="ECO:0000256" key="4">
    <source>
        <dbReference type="SAM" id="MobiDB-lite"/>
    </source>
</evidence>
<evidence type="ECO:0000269" key="5">
    <source>
    </source>
</evidence>
<evidence type="ECO:0000303" key="6">
    <source>
    </source>
</evidence>
<evidence type="ECO:0000305" key="7"/>
<evidence type="ECO:0000312" key="8">
    <source>
        <dbReference type="EMBL" id="QBL54508.1"/>
    </source>
</evidence>
<name>WTF19_SCHKA</name>
<accession>A0A482APN3</accession>
<comment type="function">
    <text evidence="5">Promotes unequal transmission of alleles from the parental zygote to progeny spores by acting as poison/antidote system where the poison and antidote proteins are produced from the same locus; the poison component is trans-acting and targets all spores within an ascus whereas the antidote component is spore-specific, leading to poisoning of all progeny that do not inherit the allele.</text>
</comment>
<comment type="function">
    <molecule>Isoform 1</molecule>
    <text evidence="1">Localizes isoform 2 to the vacuole thereby facilitating its degradation.</text>
</comment>
<comment type="function">
    <molecule>Isoform 2</molecule>
    <text evidence="1">Forms toxic aggregates that disrupt spore maturation.</text>
</comment>
<comment type="subunit">
    <text evidence="1 2">Homomer (By similarity). Forms protein aggregates (By similarity). The two isoforms can interact with each other and with themselves (By similarity). High sequence similarity is required for their interaction (By similarity).</text>
</comment>
<comment type="subcellular location">
    <molecule>Isoform 1</molecule>
    <subcellularLocation>
        <location evidence="1 3">Spore membrane</location>
        <topology evidence="3">Multi-pass membrane protein</topology>
    </subcellularLocation>
    <subcellularLocation>
        <location evidence="1 3">Vacuole membrane</location>
        <topology evidence="3">Multi-pass membrane protein</topology>
    </subcellularLocation>
    <text evidence="1">Contained within spores expressing the isoform and localizes isoform 2 to the vacuole.</text>
</comment>
<comment type="subcellular location">
    <molecule>Isoform 2</molecule>
    <subcellularLocation>
        <location evidence="1">Ascus epiplasm</location>
    </subcellularLocation>
    <subcellularLocation>
        <location evidence="1">Cytoplasm</location>
    </subcellularLocation>
    <subcellularLocation>
        <location evidence="1 3">Spore membrane</location>
        <topology evidence="3">Multi-pass membrane protein</topology>
    </subcellularLocation>
    <subcellularLocation>
        <location evidence="1 3">Vacuole membrane</location>
        <topology evidence="3">Multi-pass membrane protein</topology>
    </subcellularLocation>
    <subcellularLocation>
        <location evidence="1 3">Endoplasmic reticulum membrane</location>
        <topology evidence="3">Multi-pass membrane protein</topology>
    </subcellularLocation>
    <text evidence="1">Localizes in trans to all spores within an ascus. Localization to the spore vacuole is dependent on isoform 1.</text>
</comment>
<comment type="alternative products">
    <event type="alternative initiation"/>
    <isoform>
        <id>A0A482APN3-1</id>
        <name>1</name>
        <name evidence="6">Antidote</name>
        <name evidence="7">Suppressor</name>
        <sequence type="displayed"/>
    </isoform>
    <isoform>
        <id>A0A482APN3-2</id>
        <name>2</name>
        <name evidence="6">Poison</name>
        <sequence type="described" ref="VSP_060935"/>
    </isoform>
</comment>
<comment type="similarity">
    <text evidence="7">Belongs to the WTF family.</text>
</comment>
<dbReference type="EMBL" id="MH837445">
    <property type="protein sequence ID" value="QBL54508.1"/>
    <property type="molecule type" value="Genomic_DNA"/>
</dbReference>
<dbReference type="GO" id="GO:0072324">
    <property type="term" value="C:ascus epiplasm"/>
    <property type="evidence" value="ECO:0000305"/>
    <property type="project" value="UniProtKB"/>
</dbReference>
<dbReference type="GO" id="GO:0005737">
    <property type="term" value="C:cytoplasm"/>
    <property type="evidence" value="ECO:0000305"/>
    <property type="project" value="UniProtKB"/>
</dbReference>
<dbReference type="GO" id="GO:0005789">
    <property type="term" value="C:endoplasmic reticulum membrane"/>
    <property type="evidence" value="ECO:0007669"/>
    <property type="project" value="UniProtKB-SubCell"/>
</dbReference>
<dbReference type="GO" id="GO:0005774">
    <property type="term" value="C:vacuolar membrane"/>
    <property type="evidence" value="ECO:0007669"/>
    <property type="project" value="UniProtKB-SubCell"/>
</dbReference>
<dbReference type="GO" id="GO:0110134">
    <property type="term" value="P:meiotic drive"/>
    <property type="evidence" value="ECO:0000314"/>
    <property type="project" value="UniProtKB"/>
</dbReference>
<dbReference type="InterPro" id="IPR004982">
    <property type="entry name" value="WTF"/>
</dbReference>
<dbReference type="Pfam" id="PF03303">
    <property type="entry name" value="WTF"/>
    <property type="match status" value="2"/>
</dbReference>